<name>CY550_PARMW</name>
<feature type="signal peptide" evidence="1">
    <location>
        <begin position="1"/>
        <end position="33"/>
    </location>
</feature>
<feature type="chain" id="PRO_5000096143" description="Photosystem II extrinsic protein V">
    <location>
        <begin position="34"/>
        <end position="170"/>
    </location>
</feature>
<feature type="binding site" description="covalent" evidence="1">
    <location>
        <position position="70"/>
    </location>
    <ligand>
        <name>heme c</name>
        <dbReference type="ChEBI" id="CHEBI:61717"/>
    </ligand>
</feature>
<feature type="binding site" description="covalent" evidence="1">
    <location>
        <position position="73"/>
    </location>
    <ligand>
        <name>heme c</name>
        <dbReference type="ChEBI" id="CHEBI:61717"/>
    </ligand>
</feature>
<feature type="binding site" description="axial binding residue" evidence="1">
    <location>
        <position position="74"/>
    </location>
    <ligand>
        <name>heme c</name>
        <dbReference type="ChEBI" id="CHEBI:61717"/>
    </ligand>
    <ligandPart>
        <name>Fe</name>
        <dbReference type="ChEBI" id="CHEBI:18248"/>
    </ligandPart>
</feature>
<feature type="binding site" description="axial binding residue" evidence="1">
    <location>
        <position position="137"/>
    </location>
    <ligand>
        <name>heme c</name>
        <dbReference type="ChEBI" id="CHEBI:61717"/>
    </ligand>
    <ligandPart>
        <name>Fe</name>
        <dbReference type="ChEBI" id="CHEBI:18248"/>
    </ligandPart>
</feature>
<evidence type="ECO:0000255" key="1">
    <source>
        <dbReference type="HAMAP-Rule" id="MF_01378"/>
    </source>
</evidence>
<evidence type="ECO:0000305" key="2"/>
<gene>
    <name evidence="1" type="primary">psbV</name>
    <name type="ordered locus">SYNW0537</name>
</gene>
<keyword id="KW-0249">Electron transport</keyword>
<keyword id="KW-0349">Heme</keyword>
<keyword id="KW-0408">Iron</keyword>
<keyword id="KW-0472">Membrane</keyword>
<keyword id="KW-0479">Metal-binding</keyword>
<keyword id="KW-0602">Photosynthesis</keyword>
<keyword id="KW-0604">Photosystem II</keyword>
<keyword id="KW-0732">Signal</keyword>
<keyword id="KW-0793">Thylakoid</keyword>
<keyword id="KW-0813">Transport</keyword>
<comment type="function">
    <text evidence="1">One of the extrinsic, lumenal subunits of photosystem II (PSII). PSII is a light-driven water plastoquinone oxidoreductase, using light energy to abstract electrons from H(2)O, generating a proton gradient subsequently used for ATP formation. The extrinsic proteins stabilize the structure of photosystem II oxygen-evolving complex (OEC), the ion environment of oxygen evolution and protect the OEC against heat-induced inactivation. Low-potential cytochrome c that plays a role in the OEC of PSII.</text>
</comment>
<comment type="cofactor">
    <cofactor evidence="1">
        <name>heme c</name>
        <dbReference type="ChEBI" id="CHEBI:61717"/>
    </cofactor>
    <text evidence="1">Binds 1 heme c group covalently per subunit.</text>
</comment>
<comment type="subunit">
    <text evidence="1">PSII is composed of 1 copy each of membrane proteins PsbA, PsbB, PsbC, PsbD, PsbE, PsbF, PsbH, PsbI, PsbJ, PsbK, PsbL, PsbM, PsbT, PsbX, PsbY, PsbZ, Psb30/Ycf12, peripheral proteins PsbO, CyanoQ (PsbQ), PsbU, PsbV and a large number of cofactors. It forms dimeric complexes.</text>
</comment>
<comment type="subcellular location">
    <subcellularLocation>
        <location evidence="1">Cellular thylakoid membrane</location>
        <topology evidence="1">Peripheral membrane protein</topology>
        <orientation evidence="1">Lumenal side</orientation>
    </subcellularLocation>
    <text evidence="1">Associated with photosystem II at the lumenal side of the thylakoid membrane.</text>
</comment>
<comment type="similarity">
    <text evidence="1">Belongs to the cytochrome c family. PsbV subfamily.</text>
</comment>
<comment type="sequence caution" evidence="2">
    <conflict type="erroneous initiation">
        <sequence resource="EMBL-CDS" id="CAE07052"/>
    </conflict>
    <text>Extended N-terminus.</text>
</comment>
<dbReference type="EMBL" id="BX569690">
    <property type="protein sequence ID" value="CAE07052.1"/>
    <property type="status" value="ALT_INIT"/>
    <property type="molecule type" value="Genomic_DNA"/>
</dbReference>
<dbReference type="RefSeq" id="WP_042503023.1">
    <property type="nucleotide sequence ID" value="NC_005070.1"/>
</dbReference>
<dbReference type="SMR" id="Q7U8S5"/>
<dbReference type="STRING" id="84588.SYNW0537"/>
<dbReference type="KEGG" id="syw:SYNW0537"/>
<dbReference type="eggNOG" id="COG2010">
    <property type="taxonomic scope" value="Bacteria"/>
</dbReference>
<dbReference type="HOGENOM" id="CLU_104149_1_0_3"/>
<dbReference type="BioCyc" id="MetaCyc:TX72_RS02605-MONOMER"/>
<dbReference type="Proteomes" id="UP000001422">
    <property type="component" value="Chromosome"/>
</dbReference>
<dbReference type="GO" id="GO:0009523">
    <property type="term" value="C:photosystem II"/>
    <property type="evidence" value="ECO:0007669"/>
    <property type="project" value="UniProtKB-KW"/>
</dbReference>
<dbReference type="GO" id="GO:0031676">
    <property type="term" value="C:plasma membrane-derived thylakoid membrane"/>
    <property type="evidence" value="ECO:0007669"/>
    <property type="project" value="UniProtKB-SubCell"/>
</dbReference>
<dbReference type="GO" id="GO:0009055">
    <property type="term" value="F:electron transfer activity"/>
    <property type="evidence" value="ECO:0007669"/>
    <property type="project" value="InterPro"/>
</dbReference>
<dbReference type="GO" id="GO:0020037">
    <property type="term" value="F:heme binding"/>
    <property type="evidence" value="ECO:0007669"/>
    <property type="project" value="InterPro"/>
</dbReference>
<dbReference type="GO" id="GO:0005506">
    <property type="term" value="F:iron ion binding"/>
    <property type="evidence" value="ECO:0007669"/>
    <property type="project" value="InterPro"/>
</dbReference>
<dbReference type="GO" id="GO:0019684">
    <property type="term" value="P:photosynthesis, light reaction"/>
    <property type="evidence" value="ECO:0007669"/>
    <property type="project" value="UniProtKB-UniRule"/>
</dbReference>
<dbReference type="GO" id="GO:0022904">
    <property type="term" value="P:respiratory electron transport chain"/>
    <property type="evidence" value="ECO:0007669"/>
    <property type="project" value="InterPro"/>
</dbReference>
<dbReference type="Gene3D" id="1.10.760.10">
    <property type="entry name" value="Cytochrome c-like domain"/>
    <property type="match status" value="1"/>
</dbReference>
<dbReference type="HAMAP" id="MF_01378">
    <property type="entry name" value="PSII_Cyt550"/>
    <property type="match status" value="1"/>
</dbReference>
<dbReference type="InterPro" id="IPR009056">
    <property type="entry name" value="Cyt_c-like_dom"/>
</dbReference>
<dbReference type="InterPro" id="IPR036909">
    <property type="entry name" value="Cyt_c-like_dom_sf"/>
</dbReference>
<dbReference type="InterPro" id="IPR029490">
    <property type="entry name" value="Cytochrom_C550"/>
</dbReference>
<dbReference type="InterPro" id="IPR017851">
    <property type="entry name" value="PsbV_cyt_c550"/>
</dbReference>
<dbReference type="InterPro" id="IPR016003">
    <property type="entry name" value="PsbV_cyt_c550-like"/>
</dbReference>
<dbReference type="NCBIfam" id="TIGR03045">
    <property type="entry name" value="PS_II_C550"/>
    <property type="match status" value="1"/>
</dbReference>
<dbReference type="Pfam" id="PF14495">
    <property type="entry name" value="Cytochrom_C550"/>
    <property type="match status" value="1"/>
</dbReference>
<dbReference type="PIRSF" id="PIRSF005890">
    <property type="entry name" value="Phot_II_cyt_c550"/>
    <property type="match status" value="1"/>
</dbReference>
<dbReference type="SUPFAM" id="SSF46626">
    <property type="entry name" value="Cytochrome c"/>
    <property type="match status" value="1"/>
</dbReference>
<dbReference type="PROSITE" id="PS51007">
    <property type="entry name" value="CYTC"/>
    <property type="match status" value="1"/>
</dbReference>
<organism>
    <name type="scientific">Parasynechococcus marenigrum (strain WH8102)</name>
    <dbReference type="NCBI Taxonomy" id="84588"/>
    <lineage>
        <taxon>Bacteria</taxon>
        <taxon>Bacillati</taxon>
        <taxon>Cyanobacteriota</taxon>
        <taxon>Cyanophyceae</taxon>
        <taxon>Synechococcales</taxon>
        <taxon>Prochlorococcaceae</taxon>
        <taxon>Parasynechococcus</taxon>
        <taxon>Parasynechococcus marenigrum</taxon>
    </lineage>
</organism>
<accession>Q7U8S5</accession>
<proteinExistence type="inferred from homology"/>
<reference key="1">
    <citation type="journal article" date="2003" name="Nature">
        <title>The genome of a motile marine Synechococcus.</title>
        <authorList>
            <person name="Palenik B."/>
            <person name="Brahamsha B."/>
            <person name="Larimer F.W."/>
            <person name="Land M.L."/>
            <person name="Hauser L."/>
            <person name="Chain P."/>
            <person name="Lamerdin J.E."/>
            <person name="Regala W."/>
            <person name="Allen E.E."/>
            <person name="McCarren J."/>
            <person name="Paulsen I.T."/>
            <person name="Dufresne A."/>
            <person name="Partensky F."/>
            <person name="Webb E.A."/>
            <person name="Waterbury J."/>
        </authorList>
    </citation>
    <scope>NUCLEOTIDE SEQUENCE [LARGE SCALE GENOMIC DNA]</scope>
    <source>
        <strain>WH8102</strain>
    </source>
</reference>
<protein>
    <recommendedName>
        <fullName evidence="1">Photosystem II extrinsic protein V</fullName>
        <shortName evidence="1">PsbV</shortName>
    </recommendedName>
    <alternativeName>
        <fullName evidence="1">Cytochrome c-550</fullName>
    </alternativeName>
    <alternativeName>
        <fullName evidence="1">Cytochrome c550</fullName>
    </alternativeName>
    <alternativeName>
        <fullName evidence="1">Low-potential cytochrome c</fullName>
    </alternativeName>
</protein>
<sequence>MASLFSTLQRSLKGLLILVPVLIGLVLASPAEAVRWDAETLTVPGNPEGTQVTFSEQEINTGRKVFNTSCGTCHAGGITKTNQNVGLDPETLALATPARDNVDALVDYMKDPTSYDGEYSIADLHPSMRDAELYPAMRDLTDEELRLMAGYILVAPKVQGTAWGGGKIYF</sequence>